<gene>
    <name type="primary">Prrt4</name>
</gene>
<evidence type="ECO:0000250" key="1">
    <source>
        <dbReference type="UniProtKB" id="B2RU40"/>
    </source>
</evidence>
<evidence type="ECO:0000255" key="2"/>
<evidence type="ECO:0000256" key="3">
    <source>
        <dbReference type="SAM" id="MobiDB-lite"/>
    </source>
</evidence>
<evidence type="ECO:0000305" key="4"/>
<reference key="1">
    <citation type="journal article" date="2004" name="Nature">
        <title>Genome sequence of the Brown Norway rat yields insights into mammalian evolution.</title>
        <authorList>
            <person name="Gibbs R.A."/>
            <person name="Weinstock G.M."/>
            <person name="Metzker M.L."/>
            <person name="Muzny D.M."/>
            <person name="Sodergren E.J."/>
            <person name="Scherer S."/>
            <person name="Scott G."/>
            <person name="Steffen D."/>
            <person name="Worley K.C."/>
            <person name="Burch P.E."/>
            <person name="Okwuonu G."/>
            <person name="Hines S."/>
            <person name="Lewis L."/>
            <person name="Deramo C."/>
            <person name="Delgado O."/>
            <person name="Dugan-Rocha S."/>
            <person name="Miner G."/>
            <person name="Morgan M."/>
            <person name="Hawes A."/>
            <person name="Gill R."/>
            <person name="Holt R.A."/>
            <person name="Adams M.D."/>
            <person name="Amanatides P.G."/>
            <person name="Baden-Tillson H."/>
            <person name="Barnstead M."/>
            <person name="Chin S."/>
            <person name="Evans C.A."/>
            <person name="Ferriera S."/>
            <person name="Fosler C."/>
            <person name="Glodek A."/>
            <person name="Gu Z."/>
            <person name="Jennings D."/>
            <person name="Kraft C.L."/>
            <person name="Nguyen T."/>
            <person name="Pfannkoch C.M."/>
            <person name="Sitter C."/>
            <person name="Sutton G.G."/>
            <person name="Venter J.C."/>
            <person name="Woodage T."/>
            <person name="Smith D."/>
            <person name="Lee H.-M."/>
            <person name="Gustafson E."/>
            <person name="Cahill P."/>
            <person name="Kana A."/>
            <person name="Doucette-Stamm L."/>
            <person name="Weinstock K."/>
            <person name="Fechtel K."/>
            <person name="Weiss R.B."/>
            <person name="Dunn D.M."/>
            <person name="Green E.D."/>
            <person name="Blakesley R.W."/>
            <person name="Bouffard G.G."/>
            <person name="De Jong P.J."/>
            <person name="Osoegawa K."/>
            <person name="Zhu B."/>
            <person name="Marra M."/>
            <person name="Schein J."/>
            <person name="Bosdet I."/>
            <person name="Fjell C."/>
            <person name="Jones S."/>
            <person name="Krzywinski M."/>
            <person name="Mathewson C."/>
            <person name="Siddiqui A."/>
            <person name="Wye N."/>
            <person name="McPherson J."/>
            <person name="Zhao S."/>
            <person name="Fraser C.M."/>
            <person name="Shetty J."/>
            <person name="Shatsman S."/>
            <person name="Geer K."/>
            <person name="Chen Y."/>
            <person name="Abramzon S."/>
            <person name="Nierman W.C."/>
            <person name="Havlak P.H."/>
            <person name="Chen R."/>
            <person name="Durbin K.J."/>
            <person name="Egan A."/>
            <person name="Ren Y."/>
            <person name="Song X.-Z."/>
            <person name="Li B."/>
            <person name="Liu Y."/>
            <person name="Qin X."/>
            <person name="Cawley S."/>
            <person name="Cooney A.J."/>
            <person name="D'Souza L.M."/>
            <person name="Martin K."/>
            <person name="Wu J.Q."/>
            <person name="Gonzalez-Garay M.L."/>
            <person name="Jackson A.R."/>
            <person name="Kalafus K.J."/>
            <person name="McLeod M.P."/>
            <person name="Milosavljevic A."/>
            <person name="Virk D."/>
            <person name="Volkov A."/>
            <person name="Wheeler D.A."/>
            <person name="Zhang Z."/>
            <person name="Bailey J.A."/>
            <person name="Eichler E.E."/>
            <person name="Tuzun E."/>
            <person name="Birney E."/>
            <person name="Mongin E."/>
            <person name="Ureta-Vidal A."/>
            <person name="Woodwark C."/>
            <person name="Zdobnov E."/>
            <person name="Bork P."/>
            <person name="Suyama M."/>
            <person name="Torrents D."/>
            <person name="Alexandersson M."/>
            <person name="Trask B.J."/>
            <person name="Young J.M."/>
            <person name="Huang H."/>
            <person name="Wang H."/>
            <person name="Xing H."/>
            <person name="Daniels S."/>
            <person name="Gietzen D."/>
            <person name="Schmidt J."/>
            <person name="Stevens K."/>
            <person name="Vitt U."/>
            <person name="Wingrove J."/>
            <person name="Camara F."/>
            <person name="Mar Alba M."/>
            <person name="Abril J.F."/>
            <person name="Guigo R."/>
            <person name="Smit A."/>
            <person name="Dubchak I."/>
            <person name="Rubin E.M."/>
            <person name="Couronne O."/>
            <person name="Poliakov A."/>
            <person name="Huebner N."/>
            <person name="Ganten D."/>
            <person name="Goesele C."/>
            <person name="Hummel O."/>
            <person name="Kreitler T."/>
            <person name="Lee Y.-A."/>
            <person name="Monti J."/>
            <person name="Schulz H."/>
            <person name="Zimdahl H."/>
            <person name="Himmelbauer H."/>
            <person name="Lehrach H."/>
            <person name="Jacob H.J."/>
            <person name="Bromberg S."/>
            <person name="Gullings-Handley J."/>
            <person name="Jensen-Seaman M.I."/>
            <person name="Kwitek A.E."/>
            <person name="Lazar J."/>
            <person name="Pasko D."/>
            <person name="Tonellato P.J."/>
            <person name="Twigger S."/>
            <person name="Ponting C.P."/>
            <person name="Duarte J.M."/>
            <person name="Rice S."/>
            <person name="Goodstadt L."/>
            <person name="Beatson S.A."/>
            <person name="Emes R.D."/>
            <person name="Winter E.E."/>
            <person name="Webber C."/>
            <person name="Brandt P."/>
            <person name="Nyakatura G."/>
            <person name="Adetobi M."/>
            <person name="Chiaromonte F."/>
            <person name="Elnitski L."/>
            <person name="Eswara P."/>
            <person name="Hardison R.C."/>
            <person name="Hou M."/>
            <person name="Kolbe D."/>
            <person name="Makova K."/>
            <person name="Miller W."/>
            <person name="Nekrutenko A."/>
            <person name="Riemer C."/>
            <person name="Schwartz S."/>
            <person name="Taylor J."/>
            <person name="Yang S."/>
            <person name="Zhang Y."/>
            <person name="Lindpaintner K."/>
            <person name="Andrews T.D."/>
            <person name="Caccamo M."/>
            <person name="Clamp M."/>
            <person name="Clarke L."/>
            <person name="Curwen V."/>
            <person name="Durbin R.M."/>
            <person name="Eyras E."/>
            <person name="Searle S.M."/>
            <person name="Cooper G.M."/>
            <person name="Batzoglou S."/>
            <person name="Brudno M."/>
            <person name="Sidow A."/>
            <person name="Stone E.A."/>
            <person name="Payseur B.A."/>
            <person name="Bourque G."/>
            <person name="Lopez-Otin C."/>
            <person name="Puente X.S."/>
            <person name="Chakrabarti K."/>
            <person name="Chatterji S."/>
            <person name="Dewey C."/>
            <person name="Pachter L."/>
            <person name="Bray N."/>
            <person name="Yap V.B."/>
            <person name="Caspi A."/>
            <person name="Tesler G."/>
            <person name="Pevzner P.A."/>
            <person name="Haussler D."/>
            <person name="Roskin K.M."/>
            <person name="Baertsch R."/>
            <person name="Clawson H."/>
            <person name="Furey T.S."/>
            <person name="Hinrichs A.S."/>
            <person name="Karolchik D."/>
            <person name="Kent W.J."/>
            <person name="Rosenbloom K.R."/>
            <person name="Trumbower H."/>
            <person name="Weirauch M."/>
            <person name="Cooper D.N."/>
            <person name="Stenson P.D."/>
            <person name="Ma B."/>
            <person name="Brent M."/>
            <person name="Arumugam M."/>
            <person name="Shteynberg D."/>
            <person name="Copley R.R."/>
            <person name="Taylor M.S."/>
            <person name="Riethman H."/>
            <person name="Mudunuri U."/>
            <person name="Peterson J."/>
            <person name="Guyer M."/>
            <person name="Felsenfeld A."/>
            <person name="Old S."/>
            <person name="Mockrin S."/>
            <person name="Collins F.S."/>
        </authorList>
    </citation>
    <scope>NUCLEOTIDE SEQUENCE [LARGE SCALE GENOMIC DNA]</scope>
    <source>
        <strain>Brown Norway</strain>
    </source>
</reference>
<reference key="2">
    <citation type="submission" date="2005-07" db="EMBL/GenBank/DDBJ databases">
        <authorList>
            <person name="Mural R.J."/>
            <person name="Adams M.D."/>
            <person name="Myers E.W."/>
            <person name="Smith H.O."/>
            <person name="Venter J.C."/>
        </authorList>
    </citation>
    <scope>NUCLEOTIDE SEQUENCE [LARGE SCALE GENOMIC DNA]</scope>
</reference>
<dbReference type="EMBL" id="AC096035">
    <property type="status" value="NOT_ANNOTATED_CDS"/>
    <property type="molecule type" value="Genomic_DNA"/>
</dbReference>
<dbReference type="EMBL" id="CH473959">
    <property type="protein sequence ID" value="EDM15206.1"/>
    <property type="molecule type" value="Genomic_DNA"/>
</dbReference>
<dbReference type="RefSeq" id="NP_001102696.1">
    <property type="nucleotide sequence ID" value="NM_001109226.1"/>
</dbReference>
<dbReference type="RefSeq" id="XP_006236282.1">
    <property type="nucleotide sequence ID" value="XM_006236220.5"/>
</dbReference>
<dbReference type="RefSeq" id="XP_038964038.1">
    <property type="nucleotide sequence ID" value="XM_039108110.2"/>
</dbReference>
<dbReference type="FunCoup" id="D4A9R4">
    <property type="interactions" value="218"/>
</dbReference>
<dbReference type="iPTMnet" id="D4A9R4"/>
<dbReference type="PhosphoSitePlus" id="D4A9R4"/>
<dbReference type="PaxDb" id="10116-ENSRNOP00000057108"/>
<dbReference type="Ensembl" id="ENSRNOT00000060362.3">
    <property type="protein sequence ID" value="ENSRNOP00000057108.2"/>
    <property type="gene ID" value="ENSRNOG00000039388.3"/>
</dbReference>
<dbReference type="GeneID" id="500059"/>
<dbReference type="KEGG" id="rno:500059"/>
<dbReference type="UCSC" id="RGD:1559885">
    <property type="organism name" value="rat"/>
</dbReference>
<dbReference type="AGR" id="RGD:1559885"/>
<dbReference type="CTD" id="401399"/>
<dbReference type="RGD" id="1559885">
    <property type="gene designation" value="Prrt4"/>
</dbReference>
<dbReference type="eggNOG" id="ENOG502QU49">
    <property type="taxonomic scope" value="Eukaryota"/>
</dbReference>
<dbReference type="GeneTree" id="ENSGT00730000111591"/>
<dbReference type="HOGENOM" id="CLU_351937_0_0_1"/>
<dbReference type="InParanoid" id="D4A9R4"/>
<dbReference type="OMA" id="ARCWAKL"/>
<dbReference type="OrthoDB" id="10066605at2759"/>
<dbReference type="PhylomeDB" id="D4A9R4"/>
<dbReference type="PRO" id="PR:D4A9R4"/>
<dbReference type="Proteomes" id="UP000002494">
    <property type="component" value="Chromosome 4"/>
</dbReference>
<dbReference type="Proteomes" id="UP000234681">
    <property type="component" value="Chromosome 4"/>
</dbReference>
<dbReference type="Bgee" id="ENSRNOG00000039388">
    <property type="expression patterns" value="Expressed in cerebellum and 3 other cell types or tissues"/>
</dbReference>
<dbReference type="GO" id="GO:0016020">
    <property type="term" value="C:membrane"/>
    <property type="evidence" value="ECO:0007669"/>
    <property type="project" value="UniProtKB-SubCell"/>
</dbReference>
<dbReference type="InterPro" id="IPR052836">
    <property type="entry name" value="PRRT_domain-containing"/>
</dbReference>
<dbReference type="PANTHER" id="PTHR35578:SF6">
    <property type="entry name" value="PROLINE-RICH TRANSMEMBRANE PROTEIN 4"/>
    <property type="match status" value="1"/>
</dbReference>
<dbReference type="PANTHER" id="PTHR35578">
    <property type="entry name" value="PROLINE-RICH TRANSMEMBRANE PROTEIN 4-RELATED"/>
    <property type="match status" value="1"/>
</dbReference>
<organism>
    <name type="scientific">Rattus norvegicus</name>
    <name type="common">Rat</name>
    <dbReference type="NCBI Taxonomy" id="10116"/>
    <lineage>
        <taxon>Eukaryota</taxon>
        <taxon>Metazoa</taxon>
        <taxon>Chordata</taxon>
        <taxon>Craniata</taxon>
        <taxon>Vertebrata</taxon>
        <taxon>Euteleostomi</taxon>
        <taxon>Mammalia</taxon>
        <taxon>Eutheria</taxon>
        <taxon>Euarchontoglires</taxon>
        <taxon>Glires</taxon>
        <taxon>Rodentia</taxon>
        <taxon>Myomorpha</taxon>
        <taxon>Muroidea</taxon>
        <taxon>Muridae</taxon>
        <taxon>Murinae</taxon>
        <taxon>Rattus</taxon>
    </lineage>
</organism>
<feature type="signal peptide" evidence="2">
    <location>
        <begin position="1"/>
        <end position="18"/>
    </location>
</feature>
<feature type="chain" id="PRO_0000394500" description="Proline-rich transmembrane protein 4">
    <location>
        <begin position="19"/>
        <end position="902"/>
    </location>
</feature>
<feature type="transmembrane region" description="Helical" evidence="2">
    <location>
        <begin position="371"/>
        <end position="391"/>
    </location>
</feature>
<feature type="transmembrane region" description="Helical" evidence="2">
    <location>
        <begin position="393"/>
        <end position="413"/>
    </location>
</feature>
<feature type="transmembrane region" description="Helical" evidence="2">
    <location>
        <begin position="431"/>
        <end position="451"/>
    </location>
</feature>
<feature type="transmembrane region" description="Helical" evidence="2">
    <location>
        <begin position="465"/>
        <end position="485"/>
    </location>
</feature>
<feature type="transmembrane region" description="Helical" evidence="2">
    <location>
        <begin position="501"/>
        <end position="521"/>
    </location>
</feature>
<feature type="region of interest" description="Disordered" evidence="3">
    <location>
        <begin position="120"/>
        <end position="149"/>
    </location>
</feature>
<feature type="region of interest" description="Disordered" evidence="3">
    <location>
        <begin position="262"/>
        <end position="337"/>
    </location>
</feature>
<feature type="region of interest" description="Disordered" evidence="3">
    <location>
        <begin position="700"/>
        <end position="721"/>
    </location>
</feature>
<feature type="region of interest" description="Disordered" evidence="3">
    <location>
        <begin position="771"/>
        <end position="811"/>
    </location>
</feature>
<feature type="region of interest" description="Disordered" evidence="3">
    <location>
        <begin position="836"/>
        <end position="872"/>
    </location>
</feature>
<feature type="compositionally biased region" description="Low complexity" evidence="3">
    <location>
        <begin position="125"/>
        <end position="139"/>
    </location>
</feature>
<feature type="compositionally biased region" description="Polar residues" evidence="3">
    <location>
        <begin position="271"/>
        <end position="301"/>
    </location>
</feature>
<feature type="compositionally biased region" description="Polar residues" evidence="3">
    <location>
        <begin position="703"/>
        <end position="717"/>
    </location>
</feature>
<feature type="compositionally biased region" description="Pro residues" evidence="3">
    <location>
        <begin position="786"/>
        <end position="798"/>
    </location>
</feature>
<feature type="compositionally biased region" description="Low complexity" evidence="3">
    <location>
        <begin position="799"/>
        <end position="811"/>
    </location>
</feature>
<feature type="compositionally biased region" description="Low complexity" evidence="3">
    <location>
        <begin position="843"/>
        <end position="854"/>
    </location>
</feature>
<feature type="modified residue" description="Phosphoserine" evidence="1">
    <location>
        <position position="642"/>
    </location>
</feature>
<sequence>MAGRGCLELGLFCWVLLAVPVGPQPASSVPGAPLTTLTPPPQSEASMLSLNLGLNFKFHLRGPAAVWGSPVTETHPLSPGLGQESEEDLEGDLRTDPLWELLVGSPGNYVPEWGSAEGSFTPWASSLPPESTSPLSGPTKRPTAPSQPRMSTVTWATALTATAPPTSAPRPRQSELELKFDVALRAGAAPTLGHRSLPLLPSLRASLAEIAGRLGPFGFFGTTLSPLRNFSSQSYQGTTAQPSFASEVSDFPGLFGTTGSLPPPLLERKFSSPSPLDSVASPSSASIKTTPVQHDPTVSTSDPDELSPASFGSPSAQPGCEPGSCSEPELSDDSGQPPASPLPLFFLTLEADWAEARARWGLAWEAHVYGAGALFGLVALLALLSLALLPWRCPPGAPCLALLDLLLLSAGTTRAFPLFYDAYGHRDRLPALAWLLLQDLPLPCLAAGLGLACLLLARPRTPRCPIGLAALLLLGLGLAAAAALGSAVHRPLRPLRLASRGLHAFLAAFLSGLLLALSCWGGRRRRAGAPLGGSGFKGATPVPQVRSPFAPRESWRRAARTAPVAGTFGLLSGALQGYEVLHALGYGGQTGLEGPWPWWAFQLGLRLGEVGVALPLALLGLYPALCSPRVPRRCWAKLFRLSPGHAAPLLPGGWVPGIRDKEPLGSAIARGDAELLQLCALAGPGPDLLLQGGSCPGFEGARANTTQSPASSPSSDCTVDFRPPSPINLRRSIEEALCSEALLAPGLFQGPAFGDALSGLGLYRTISLGNKTGAGPSEKSEKVPGSPAPPELPSPGAWPPGSSASSGSLCGLSRDSSSMLLCSSPDRPPRCPLVCVLSPPRPSESSPSLPASGSYQALSPPSRDSPEHASELQAEEALLQEQFLDACRQIDELSMGSDTIDL</sequence>
<proteinExistence type="inferred from homology"/>
<name>PRRT4_RAT</name>
<comment type="subcellular location">
    <subcellularLocation>
        <location evidence="4">Membrane</location>
        <topology evidence="4">Multi-pass membrane protein</topology>
    </subcellularLocation>
</comment>
<accession>D4A9R4</accession>
<protein>
    <recommendedName>
        <fullName>Proline-rich transmembrane protein 4</fullName>
    </recommendedName>
</protein>
<keyword id="KW-0472">Membrane</keyword>
<keyword id="KW-0597">Phosphoprotein</keyword>
<keyword id="KW-1185">Reference proteome</keyword>
<keyword id="KW-0732">Signal</keyword>
<keyword id="KW-0812">Transmembrane</keyword>
<keyword id="KW-1133">Transmembrane helix</keyword>